<gene>
    <name type="ordered locus">YOR072W</name>
    <name type="ORF">O2937</name>
    <name type="ORF">YOR29-23</name>
</gene>
<keyword id="KW-1185">Reference proteome</keyword>
<reference key="1">
    <citation type="journal article" date="1997" name="Yeast">
        <title>The sequence of a 54.7 kb fragment of yeast chromosome XV reveals the presence of two tRNAs and 24 new open reading frames.</title>
        <authorList>
            <person name="Valens M."/>
            <person name="Bohn C."/>
            <person name="Daignan-Fornier B."/>
            <person name="Dang V.-D."/>
            <person name="Bolotin-Fukuhara M."/>
        </authorList>
    </citation>
    <scope>NUCLEOTIDE SEQUENCE [GENOMIC DNA]</scope>
    <source>
        <strain>ATCC 96604 / S288c / FY1679</strain>
    </source>
</reference>
<reference key="2">
    <citation type="journal article" date="1997" name="Nature">
        <title>The nucleotide sequence of Saccharomyces cerevisiae chromosome XV.</title>
        <authorList>
            <person name="Dujon B."/>
            <person name="Albermann K."/>
            <person name="Aldea M."/>
            <person name="Alexandraki D."/>
            <person name="Ansorge W."/>
            <person name="Arino J."/>
            <person name="Benes V."/>
            <person name="Bohn C."/>
            <person name="Bolotin-Fukuhara M."/>
            <person name="Bordonne R."/>
            <person name="Boyer J."/>
            <person name="Camasses A."/>
            <person name="Casamayor A."/>
            <person name="Casas C."/>
            <person name="Cheret G."/>
            <person name="Cziepluch C."/>
            <person name="Daignan-Fornier B."/>
            <person name="Dang V.-D."/>
            <person name="de Haan M."/>
            <person name="Delius H."/>
            <person name="Durand P."/>
            <person name="Fairhead C."/>
            <person name="Feldmann H."/>
            <person name="Gaillon L."/>
            <person name="Galisson F."/>
            <person name="Gamo F.-J."/>
            <person name="Gancedo C."/>
            <person name="Goffeau A."/>
            <person name="Goulding S.E."/>
            <person name="Grivell L.A."/>
            <person name="Habbig B."/>
            <person name="Hand N.J."/>
            <person name="Hani J."/>
            <person name="Hattenhorst U."/>
            <person name="Hebling U."/>
            <person name="Hernando Y."/>
            <person name="Herrero E."/>
            <person name="Heumann K."/>
            <person name="Hiesel R."/>
            <person name="Hilger F."/>
            <person name="Hofmann B."/>
            <person name="Hollenberg C.P."/>
            <person name="Hughes B."/>
            <person name="Jauniaux J.-C."/>
            <person name="Kalogeropoulos A."/>
            <person name="Katsoulou C."/>
            <person name="Kordes E."/>
            <person name="Lafuente M.J."/>
            <person name="Landt O."/>
            <person name="Louis E.J."/>
            <person name="Maarse A.C."/>
            <person name="Madania A."/>
            <person name="Mannhaupt G."/>
            <person name="Marck C."/>
            <person name="Martin R.P."/>
            <person name="Mewes H.-W."/>
            <person name="Michaux G."/>
            <person name="Paces V."/>
            <person name="Parle-McDermott A.G."/>
            <person name="Pearson B.M."/>
            <person name="Perrin A."/>
            <person name="Pettersson B."/>
            <person name="Poch O."/>
            <person name="Pohl T.M."/>
            <person name="Poirey R."/>
            <person name="Portetelle D."/>
            <person name="Pujol A."/>
            <person name="Purnelle B."/>
            <person name="Ramezani Rad M."/>
            <person name="Rechmann S."/>
            <person name="Schwager C."/>
            <person name="Schweizer M."/>
            <person name="Sor F."/>
            <person name="Sterky F."/>
            <person name="Tarassov I.A."/>
            <person name="Teodoru C."/>
            <person name="Tettelin H."/>
            <person name="Thierry A."/>
            <person name="Tobiasch E."/>
            <person name="Tzermia M."/>
            <person name="Uhlen M."/>
            <person name="Unseld M."/>
            <person name="Valens M."/>
            <person name="Vandenbol M."/>
            <person name="Vetter I."/>
            <person name="Vlcek C."/>
            <person name="Voet M."/>
            <person name="Volckaert G."/>
            <person name="Voss H."/>
            <person name="Wambutt R."/>
            <person name="Wedler H."/>
            <person name="Wiemann S."/>
            <person name="Winsor B."/>
            <person name="Wolfe K.H."/>
            <person name="Zollner A."/>
            <person name="Zumstein E."/>
            <person name="Kleine K."/>
        </authorList>
    </citation>
    <scope>NUCLEOTIDE SEQUENCE [LARGE SCALE GENOMIC DNA]</scope>
    <source>
        <strain>ATCC 204508 / S288c</strain>
    </source>
</reference>
<reference key="3">
    <citation type="journal article" date="2014" name="G3 (Bethesda)">
        <title>The reference genome sequence of Saccharomyces cerevisiae: Then and now.</title>
        <authorList>
            <person name="Engel S.R."/>
            <person name="Dietrich F.S."/>
            <person name="Fisk D.G."/>
            <person name="Binkley G."/>
            <person name="Balakrishnan R."/>
            <person name="Costanzo M.C."/>
            <person name="Dwight S.S."/>
            <person name="Hitz B.C."/>
            <person name="Karra K."/>
            <person name="Nash R.S."/>
            <person name="Weng S."/>
            <person name="Wong E.D."/>
            <person name="Lloyd P."/>
            <person name="Skrzypek M.S."/>
            <person name="Miyasato S.R."/>
            <person name="Simison M."/>
            <person name="Cherry J.M."/>
        </authorList>
    </citation>
    <scope>GENOME REANNOTATION</scope>
    <source>
        <strain>ATCC 204508 / S288c</strain>
    </source>
</reference>
<protein>
    <recommendedName>
        <fullName>Uncharacterized protein YOR072W</fullName>
    </recommendedName>
</protein>
<accession>Q08486</accession>
<accession>A0A1S0T0B5</accession>
<accession>O00030</accession>
<sequence length="104" mass="12140">MLTKVVFLFFWSRSDSTKKLAACNHATLAHYILTPALYSDACAIYSDVYSITIIVVATVVRNPARCSLRARKFCRLFSSFFQFHYLKELFYFIRKPDDKFSSFI</sequence>
<proteinExistence type="predicted"/>
<name>YOR72_YEAST</name>
<dbReference type="EMBL" id="Z70678">
    <property type="protein sequence ID" value="CAA94557.1"/>
    <property type="molecule type" value="Genomic_DNA"/>
</dbReference>
<dbReference type="EMBL" id="Z74980">
    <property type="protein sequence ID" value="CAA99265.1"/>
    <property type="molecule type" value="Genomic_DNA"/>
</dbReference>
<dbReference type="EMBL" id="BK006948">
    <property type="protein sequence ID" value="DAA80336.1"/>
    <property type="molecule type" value="Genomic_DNA"/>
</dbReference>
<dbReference type="PIR" id="S66955">
    <property type="entry name" value="S66955"/>
</dbReference>
<dbReference type="SMR" id="Q08486"/>
<dbReference type="DIP" id="DIP-5323N"/>
<dbReference type="FunCoup" id="Q08486">
    <property type="interactions" value="20"/>
</dbReference>
<dbReference type="STRING" id="4932.YOR072W"/>
<dbReference type="PaxDb" id="4932-YOR072W"/>
<dbReference type="EnsemblFungi" id="YOR072W_mRNA">
    <property type="protein sequence ID" value="YOR072W"/>
    <property type="gene ID" value="YOR072W"/>
</dbReference>
<dbReference type="GeneID" id="854238"/>
<dbReference type="AGR" id="SGD:S000005598"/>
<dbReference type="SGD" id="S000005598">
    <property type="gene designation" value="YOR072W"/>
</dbReference>
<dbReference type="HOGENOM" id="CLU_2252173_0_0_1"/>
<dbReference type="InParanoid" id="Q08486"/>
<dbReference type="PRO" id="PR:Q08486"/>
<dbReference type="Proteomes" id="UP000002311">
    <property type="component" value="Chromosome XV"/>
</dbReference>
<dbReference type="RNAct" id="Q08486">
    <property type="molecule type" value="protein"/>
</dbReference>
<feature type="chain" id="PRO_0000299709" description="Uncharacterized protein YOR072W">
    <location>
        <begin position="1"/>
        <end position="104"/>
    </location>
</feature>
<organism>
    <name type="scientific">Saccharomyces cerevisiae (strain ATCC 204508 / S288c)</name>
    <name type="common">Baker's yeast</name>
    <dbReference type="NCBI Taxonomy" id="559292"/>
    <lineage>
        <taxon>Eukaryota</taxon>
        <taxon>Fungi</taxon>
        <taxon>Dikarya</taxon>
        <taxon>Ascomycota</taxon>
        <taxon>Saccharomycotina</taxon>
        <taxon>Saccharomycetes</taxon>
        <taxon>Saccharomycetales</taxon>
        <taxon>Saccharomycetaceae</taxon>
        <taxon>Saccharomyces</taxon>
    </lineage>
</organism>